<evidence type="ECO:0000250" key="1"/>
<evidence type="ECO:0000305" key="2"/>
<gene>
    <name type="primary">tal</name>
    <name type="ordered locus">HP_1495</name>
</gene>
<reference key="1">
    <citation type="journal article" date="1997" name="Nature">
        <title>The complete genome sequence of the gastric pathogen Helicobacter pylori.</title>
        <authorList>
            <person name="Tomb J.-F."/>
            <person name="White O."/>
            <person name="Kerlavage A.R."/>
            <person name="Clayton R.A."/>
            <person name="Sutton G.G."/>
            <person name="Fleischmann R.D."/>
            <person name="Ketchum K.A."/>
            <person name="Klenk H.-P."/>
            <person name="Gill S.R."/>
            <person name="Dougherty B.A."/>
            <person name="Nelson K.E."/>
            <person name="Quackenbush J."/>
            <person name="Zhou L."/>
            <person name="Kirkness E.F."/>
            <person name="Peterson S.N."/>
            <person name="Loftus B.J."/>
            <person name="Richardson D.L."/>
            <person name="Dodson R.J."/>
            <person name="Khalak H.G."/>
            <person name="Glodek A."/>
            <person name="McKenney K."/>
            <person name="FitzGerald L.M."/>
            <person name="Lee N."/>
            <person name="Adams M.D."/>
            <person name="Hickey E.K."/>
            <person name="Berg D.E."/>
            <person name="Gocayne J.D."/>
            <person name="Utterback T.R."/>
            <person name="Peterson J.D."/>
            <person name="Kelley J.M."/>
            <person name="Cotton M.D."/>
            <person name="Weidman J.F."/>
            <person name="Fujii C."/>
            <person name="Bowman C."/>
            <person name="Watthey L."/>
            <person name="Wallin E."/>
            <person name="Hayes W.S."/>
            <person name="Borodovsky M."/>
            <person name="Karp P.D."/>
            <person name="Smith H.O."/>
            <person name="Fraser C.M."/>
            <person name="Venter J.C."/>
        </authorList>
    </citation>
    <scope>NUCLEOTIDE SEQUENCE [LARGE SCALE GENOMIC DNA]</scope>
    <source>
        <strain>ATCC 700392 / 26695</strain>
    </source>
</reference>
<feature type="chain" id="PRO_0000173631" description="Transaldolase">
    <location>
        <begin position="1"/>
        <end position="316"/>
    </location>
</feature>
<feature type="active site" description="Schiff-base intermediate with substrate" evidence="1">
    <location>
        <position position="127"/>
    </location>
</feature>
<sequence length="316" mass="35195">MQEFSLWCDFIERDFLENDFLKLINKGAICGATSNPSLFCEAITKSAFYKDEIAKLKGKKAKEIYETLALKDILQASSALMPLYEKDPNNGYISLEIDPFLEDDAAKSIDEAKRLFKTLNRPNVMIKVPASESGIEVVSALTQASIPVNVTLVFSPKIAGEIAQILAKEAQKRAVISVFVSRFDKEIDPLVPKNLQAQSGIINATECYYQINQHANKLTSTLFASTGVKSNSLAKDYYIKALCFKNSINTAPLEALNAYLLDPNTECQTPLKTTEIEAFKKELKVHNIDLENTAQKLLKEGLIAFKQSFEKLLSSF</sequence>
<keyword id="KW-0963">Cytoplasm</keyword>
<keyword id="KW-0570">Pentose shunt</keyword>
<keyword id="KW-1185">Reference proteome</keyword>
<keyword id="KW-0704">Schiff base</keyword>
<keyword id="KW-0808">Transferase</keyword>
<dbReference type="EC" id="2.2.1.2"/>
<dbReference type="EMBL" id="AE000511">
    <property type="protein sequence ID" value="AAD08536.1"/>
    <property type="molecule type" value="Genomic_DNA"/>
</dbReference>
<dbReference type="PIR" id="G64706">
    <property type="entry name" value="G64706"/>
</dbReference>
<dbReference type="RefSeq" id="NP_208286.1">
    <property type="nucleotide sequence ID" value="NC_000915.1"/>
</dbReference>
<dbReference type="RefSeq" id="WP_001155041.1">
    <property type="nucleotide sequence ID" value="NC_018939.1"/>
</dbReference>
<dbReference type="SMR" id="P56108"/>
<dbReference type="FunCoup" id="P56108">
    <property type="interactions" value="340"/>
</dbReference>
<dbReference type="STRING" id="85962.HP_1495"/>
<dbReference type="PaxDb" id="85962-C694_07745"/>
<dbReference type="EnsemblBacteria" id="AAD08536">
    <property type="protein sequence ID" value="AAD08536"/>
    <property type="gene ID" value="HP_1495"/>
</dbReference>
<dbReference type="KEGG" id="heo:C694_07745"/>
<dbReference type="KEGG" id="hpy:HP_1495"/>
<dbReference type="PATRIC" id="fig|85962.47.peg.1607"/>
<dbReference type="eggNOG" id="COG0176">
    <property type="taxonomic scope" value="Bacteria"/>
</dbReference>
<dbReference type="InParanoid" id="P56108"/>
<dbReference type="OrthoDB" id="9809101at2"/>
<dbReference type="PhylomeDB" id="P56108"/>
<dbReference type="UniPathway" id="UPA00115">
    <property type="reaction ID" value="UER00414"/>
</dbReference>
<dbReference type="Proteomes" id="UP000000429">
    <property type="component" value="Chromosome"/>
</dbReference>
<dbReference type="GO" id="GO:0005737">
    <property type="term" value="C:cytoplasm"/>
    <property type="evidence" value="ECO:0007669"/>
    <property type="project" value="UniProtKB-SubCell"/>
</dbReference>
<dbReference type="GO" id="GO:0004801">
    <property type="term" value="F:transaldolase activity"/>
    <property type="evidence" value="ECO:0007669"/>
    <property type="project" value="UniProtKB-UniRule"/>
</dbReference>
<dbReference type="GO" id="GO:0005975">
    <property type="term" value="P:carbohydrate metabolic process"/>
    <property type="evidence" value="ECO:0007669"/>
    <property type="project" value="InterPro"/>
</dbReference>
<dbReference type="GO" id="GO:0006098">
    <property type="term" value="P:pentose-phosphate shunt"/>
    <property type="evidence" value="ECO:0007669"/>
    <property type="project" value="UniProtKB-UniRule"/>
</dbReference>
<dbReference type="CDD" id="cd00955">
    <property type="entry name" value="Transaldolase_like"/>
    <property type="match status" value="1"/>
</dbReference>
<dbReference type="Gene3D" id="3.20.20.70">
    <property type="entry name" value="Aldolase class I"/>
    <property type="match status" value="1"/>
</dbReference>
<dbReference type="HAMAP" id="MF_00493">
    <property type="entry name" value="Transaldolase_2"/>
    <property type="match status" value="1"/>
</dbReference>
<dbReference type="InterPro" id="IPR013785">
    <property type="entry name" value="Aldolase_TIM"/>
</dbReference>
<dbReference type="InterPro" id="IPR001585">
    <property type="entry name" value="TAL/FSA"/>
</dbReference>
<dbReference type="InterPro" id="IPR004732">
    <property type="entry name" value="Transaldolase_2"/>
</dbReference>
<dbReference type="InterPro" id="IPR018225">
    <property type="entry name" value="Transaldolase_AS"/>
</dbReference>
<dbReference type="NCBIfam" id="NF003026">
    <property type="entry name" value="PRK03903.1"/>
    <property type="match status" value="1"/>
</dbReference>
<dbReference type="NCBIfam" id="TIGR00876">
    <property type="entry name" value="tal_mycobact"/>
    <property type="match status" value="1"/>
</dbReference>
<dbReference type="PANTHER" id="PTHR10683">
    <property type="entry name" value="TRANSALDOLASE"/>
    <property type="match status" value="1"/>
</dbReference>
<dbReference type="PANTHER" id="PTHR10683:SF31">
    <property type="entry name" value="TRANSALDOLASE"/>
    <property type="match status" value="1"/>
</dbReference>
<dbReference type="Pfam" id="PF00923">
    <property type="entry name" value="TAL_FSA"/>
    <property type="match status" value="1"/>
</dbReference>
<dbReference type="PIRSF" id="PIRSF036915">
    <property type="entry name" value="Trnald_Bac_Plnt"/>
    <property type="match status" value="1"/>
</dbReference>
<dbReference type="SUPFAM" id="SSF51569">
    <property type="entry name" value="Aldolase"/>
    <property type="match status" value="1"/>
</dbReference>
<dbReference type="PROSITE" id="PS01054">
    <property type="entry name" value="TRANSALDOLASE_1"/>
    <property type="match status" value="1"/>
</dbReference>
<dbReference type="PROSITE" id="PS00958">
    <property type="entry name" value="TRANSALDOLASE_2"/>
    <property type="match status" value="1"/>
</dbReference>
<accession>P56108</accession>
<proteinExistence type="inferred from homology"/>
<protein>
    <recommendedName>
        <fullName>Transaldolase</fullName>
        <ecNumber>2.2.1.2</ecNumber>
    </recommendedName>
</protein>
<comment type="function">
    <text evidence="1">Transaldolase is important for the balance of metabolites in the pentose-phosphate pathway.</text>
</comment>
<comment type="catalytic activity">
    <reaction>
        <text>D-sedoheptulose 7-phosphate + D-glyceraldehyde 3-phosphate = D-erythrose 4-phosphate + beta-D-fructose 6-phosphate</text>
        <dbReference type="Rhea" id="RHEA:17053"/>
        <dbReference type="ChEBI" id="CHEBI:16897"/>
        <dbReference type="ChEBI" id="CHEBI:57483"/>
        <dbReference type="ChEBI" id="CHEBI:57634"/>
        <dbReference type="ChEBI" id="CHEBI:59776"/>
        <dbReference type="EC" id="2.2.1.2"/>
    </reaction>
</comment>
<comment type="pathway">
    <text>Carbohydrate degradation; pentose phosphate pathway; D-glyceraldehyde 3-phosphate and beta-D-fructose 6-phosphate from D-ribose 5-phosphate and D-xylulose 5-phosphate (non-oxidative stage): step 2/3.</text>
</comment>
<comment type="subcellular location">
    <subcellularLocation>
        <location evidence="1">Cytoplasm</location>
    </subcellularLocation>
</comment>
<comment type="similarity">
    <text evidence="2">Belongs to the transaldolase family. Type 2 subfamily.</text>
</comment>
<name>TAL_HELPY</name>
<organism>
    <name type="scientific">Helicobacter pylori (strain ATCC 700392 / 26695)</name>
    <name type="common">Campylobacter pylori</name>
    <dbReference type="NCBI Taxonomy" id="85962"/>
    <lineage>
        <taxon>Bacteria</taxon>
        <taxon>Pseudomonadati</taxon>
        <taxon>Campylobacterota</taxon>
        <taxon>Epsilonproteobacteria</taxon>
        <taxon>Campylobacterales</taxon>
        <taxon>Helicobacteraceae</taxon>
        <taxon>Helicobacter</taxon>
    </lineage>
</organism>